<sequence>MLDNPKLTARQQQVLDLIQNTMARTGAPPTRAEIAAELGFKSANAAEEHLQALARKGAIELVSGTSRGIRLHSETLRSIHAARSGPSGAGNPGSSPWVLPLIGRVAAGSPILAQEHVEQTYSVENGLFQHKPDYLLKVRGMSMRDAGIIDGDLLAVQATREARNGQIIVARLGDDVTVKRLRRTASTIELLPENPDYPVIVVQPGEPFEIEGLAVGLIRNTMLM</sequence>
<evidence type="ECO:0000255" key="1">
    <source>
        <dbReference type="HAMAP-Rule" id="MF_00015"/>
    </source>
</evidence>
<feature type="chain" id="PRO_0000322772" description="LexA repressor">
    <location>
        <begin position="1"/>
        <end position="224"/>
    </location>
</feature>
<feature type="DNA-binding region" description="H-T-H motif" evidence="1">
    <location>
        <begin position="31"/>
        <end position="51"/>
    </location>
</feature>
<feature type="active site" description="For autocatalytic cleavage activity" evidence="1">
    <location>
        <position position="142"/>
    </location>
</feature>
<feature type="active site" description="For autocatalytic cleavage activity" evidence="1">
    <location>
        <position position="179"/>
    </location>
</feature>
<feature type="site" description="Cleavage; by autolysis" evidence="1">
    <location>
        <begin position="107"/>
        <end position="108"/>
    </location>
</feature>
<comment type="function">
    <text evidence="1">Represses a number of genes involved in the response to DNA damage (SOS response), including recA and lexA. In the presence of single-stranded DNA, RecA interacts with LexA causing an autocatalytic cleavage which disrupts the DNA-binding part of LexA, leading to derepression of the SOS regulon and eventually DNA repair.</text>
</comment>
<comment type="catalytic activity">
    <reaction evidence="1">
        <text>Hydrolysis of Ala-|-Gly bond in repressor LexA.</text>
        <dbReference type="EC" id="3.4.21.88"/>
    </reaction>
</comment>
<comment type="subunit">
    <text evidence="1">Homodimer.</text>
</comment>
<comment type="similarity">
    <text evidence="1">Belongs to the peptidase S24 family.</text>
</comment>
<protein>
    <recommendedName>
        <fullName evidence="1">LexA repressor</fullName>
        <ecNumber evidence="1">3.4.21.88</ecNumber>
    </recommendedName>
</protein>
<accession>A1WSJ3</accession>
<proteinExistence type="inferred from homology"/>
<gene>
    <name evidence="1" type="primary">lexA</name>
    <name type="ordered locus">Veis_4912</name>
</gene>
<name>LEXA_VEREI</name>
<keyword id="KW-0068">Autocatalytic cleavage</keyword>
<keyword id="KW-0227">DNA damage</keyword>
<keyword id="KW-0234">DNA repair</keyword>
<keyword id="KW-0235">DNA replication</keyword>
<keyword id="KW-0238">DNA-binding</keyword>
<keyword id="KW-0378">Hydrolase</keyword>
<keyword id="KW-1185">Reference proteome</keyword>
<keyword id="KW-0678">Repressor</keyword>
<keyword id="KW-0742">SOS response</keyword>
<keyword id="KW-0804">Transcription</keyword>
<keyword id="KW-0805">Transcription regulation</keyword>
<organism>
    <name type="scientific">Verminephrobacter eiseniae (strain EF01-2)</name>
    <dbReference type="NCBI Taxonomy" id="391735"/>
    <lineage>
        <taxon>Bacteria</taxon>
        <taxon>Pseudomonadati</taxon>
        <taxon>Pseudomonadota</taxon>
        <taxon>Betaproteobacteria</taxon>
        <taxon>Burkholderiales</taxon>
        <taxon>Comamonadaceae</taxon>
        <taxon>Verminephrobacter</taxon>
    </lineage>
</organism>
<dbReference type="EC" id="3.4.21.88" evidence="1"/>
<dbReference type="EMBL" id="CP000542">
    <property type="protein sequence ID" value="ABM60600.1"/>
    <property type="molecule type" value="Genomic_DNA"/>
</dbReference>
<dbReference type="RefSeq" id="WP_011812578.1">
    <property type="nucleotide sequence ID" value="NC_008786.1"/>
</dbReference>
<dbReference type="SMR" id="A1WSJ3"/>
<dbReference type="STRING" id="391735.Veis_4912"/>
<dbReference type="MEROPS" id="S24.001"/>
<dbReference type="GeneID" id="76463174"/>
<dbReference type="KEGG" id="vei:Veis_4912"/>
<dbReference type="eggNOG" id="COG1974">
    <property type="taxonomic scope" value="Bacteria"/>
</dbReference>
<dbReference type="HOGENOM" id="CLU_066192_45_3_4"/>
<dbReference type="OrthoDB" id="9802364at2"/>
<dbReference type="Proteomes" id="UP000000374">
    <property type="component" value="Chromosome"/>
</dbReference>
<dbReference type="GO" id="GO:0003677">
    <property type="term" value="F:DNA binding"/>
    <property type="evidence" value="ECO:0007669"/>
    <property type="project" value="UniProtKB-UniRule"/>
</dbReference>
<dbReference type="GO" id="GO:0004252">
    <property type="term" value="F:serine-type endopeptidase activity"/>
    <property type="evidence" value="ECO:0007669"/>
    <property type="project" value="UniProtKB-UniRule"/>
</dbReference>
<dbReference type="GO" id="GO:0006281">
    <property type="term" value="P:DNA repair"/>
    <property type="evidence" value="ECO:0007669"/>
    <property type="project" value="UniProtKB-UniRule"/>
</dbReference>
<dbReference type="GO" id="GO:0006260">
    <property type="term" value="P:DNA replication"/>
    <property type="evidence" value="ECO:0007669"/>
    <property type="project" value="UniProtKB-UniRule"/>
</dbReference>
<dbReference type="GO" id="GO:0045892">
    <property type="term" value="P:negative regulation of DNA-templated transcription"/>
    <property type="evidence" value="ECO:0007669"/>
    <property type="project" value="UniProtKB-UniRule"/>
</dbReference>
<dbReference type="GO" id="GO:0006508">
    <property type="term" value="P:proteolysis"/>
    <property type="evidence" value="ECO:0007669"/>
    <property type="project" value="InterPro"/>
</dbReference>
<dbReference type="GO" id="GO:0009432">
    <property type="term" value="P:SOS response"/>
    <property type="evidence" value="ECO:0007669"/>
    <property type="project" value="UniProtKB-UniRule"/>
</dbReference>
<dbReference type="CDD" id="cd06529">
    <property type="entry name" value="S24_LexA-like"/>
    <property type="match status" value="1"/>
</dbReference>
<dbReference type="FunFam" id="1.10.10.10:FF:000009">
    <property type="entry name" value="LexA repressor"/>
    <property type="match status" value="1"/>
</dbReference>
<dbReference type="FunFam" id="2.10.109.10:FF:000001">
    <property type="entry name" value="LexA repressor"/>
    <property type="match status" value="1"/>
</dbReference>
<dbReference type="Gene3D" id="2.10.109.10">
    <property type="entry name" value="Umud Fragment, subunit A"/>
    <property type="match status" value="1"/>
</dbReference>
<dbReference type="Gene3D" id="1.10.10.10">
    <property type="entry name" value="Winged helix-like DNA-binding domain superfamily/Winged helix DNA-binding domain"/>
    <property type="match status" value="1"/>
</dbReference>
<dbReference type="HAMAP" id="MF_00015">
    <property type="entry name" value="LexA"/>
    <property type="match status" value="1"/>
</dbReference>
<dbReference type="InterPro" id="IPR006200">
    <property type="entry name" value="LexA"/>
</dbReference>
<dbReference type="InterPro" id="IPR039418">
    <property type="entry name" value="LexA-like"/>
</dbReference>
<dbReference type="InterPro" id="IPR036286">
    <property type="entry name" value="LexA/Signal_pep-like_sf"/>
</dbReference>
<dbReference type="InterPro" id="IPR006199">
    <property type="entry name" value="LexA_DNA-bd_dom"/>
</dbReference>
<dbReference type="InterPro" id="IPR050077">
    <property type="entry name" value="LexA_repressor"/>
</dbReference>
<dbReference type="InterPro" id="IPR006197">
    <property type="entry name" value="Peptidase_S24_LexA"/>
</dbReference>
<dbReference type="InterPro" id="IPR015927">
    <property type="entry name" value="Peptidase_S24_S26A/B/C"/>
</dbReference>
<dbReference type="InterPro" id="IPR036388">
    <property type="entry name" value="WH-like_DNA-bd_sf"/>
</dbReference>
<dbReference type="InterPro" id="IPR036390">
    <property type="entry name" value="WH_DNA-bd_sf"/>
</dbReference>
<dbReference type="NCBIfam" id="TIGR00498">
    <property type="entry name" value="lexA"/>
    <property type="match status" value="1"/>
</dbReference>
<dbReference type="PANTHER" id="PTHR33516">
    <property type="entry name" value="LEXA REPRESSOR"/>
    <property type="match status" value="1"/>
</dbReference>
<dbReference type="PANTHER" id="PTHR33516:SF2">
    <property type="entry name" value="LEXA REPRESSOR-RELATED"/>
    <property type="match status" value="1"/>
</dbReference>
<dbReference type="Pfam" id="PF01726">
    <property type="entry name" value="LexA_DNA_bind"/>
    <property type="match status" value="1"/>
</dbReference>
<dbReference type="Pfam" id="PF00717">
    <property type="entry name" value="Peptidase_S24"/>
    <property type="match status" value="1"/>
</dbReference>
<dbReference type="PRINTS" id="PR00726">
    <property type="entry name" value="LEXASERPTASE"/>
</dbReference>
<dbReference type="SUPFAM" id="SSF51306">
    <property type="entry name" value="LexA/Signal peptidase"/>
    <property type="match status" value="1"/>
</dbReference>
<dbReference type="SUPFAM" id="SSF46785">
    <property type="entry name" value="Winged helix' DNA-binding domain"/>
    <property type="match status" value="1"/>
</dbReference>
<reference key="1">
    <citation type="submission" date="2006-12" db="EMBL/GenBank/DDBJ databases">
        <title>Complete sequence of chromosome 1 of Verminephrobacter eiseniae EF01-2.</title>
        <authorList>
            <person name="Copeland A."/>
            <person name="Lucas S."/>
            <person name="Lapidus A."/>
            <person name="Barry K."/>
            <person name="Detter J.C."/>
            <person name="Glavina del Rio T."/>
            <person name="Dalin E."/>
            <person name="Tice H."/>
            <person name="Pitluck S."/>
            <person name="Chertkov O."/>
            <person name="Brettin T."/>
            <person name="Bruce D."/>
            <person name="Han C."/>
            <person name="Tapia R."/>
            <person name="Gilna P."/>
            <person name="Schmutz J."/>
            <person name="Larimer F."/>
            <person name="Land M."/>
            <person name="Hauser L."/>
            <person name="Kyrpides N."/>
            <person name="Kim E."/>
            <person name="Stahl D."/>
            <person name="Richardson P."/>
        </authorList>
    </citation>
    <scope>NUCLEOTIDE SEQUENCE [LARGE SCALE GENOMIC DNA]</scope>
    <source>
        <strain>EF01-2</strain>
    </source>
</reference>